<reference key="1">
    <citation type="journal article" date="2006" name="BMC Evol. Biol.">
        <title>Phylogenetic analyses of Vitis (Vitaceae) based on complete chloroplast genome sequences: effects of taxon sampling and phylogenetic methods on resolving relationships among rosids.</title>
        <authorList>
            <person name="Jansen R.K."/>
            <person name="Kaittanis C."/>
            <person name="Lee S.-B."/>
            <person name="Saski C."/>
            <person name="Tomkins J."/>
            <person name="Alverson A.J."/>
            <person name="Daniell H."/>
        </authorList>
    </citation>
    <scope>NUCLEOTIDE SEQUENCE [LARGE SCALE GENOMIC DNA]</scope>
    <source>
        <strain>cv. Maxxa</strain>
    </source>
</reference>
<proteinExistence type="inferred from homology"/>
<organism>
    <name type="scientific">Vitis vinifera</name>
    <name type="common">Grape</name>
    <dbReference type="NCBI Taxonomy" id="29760"/>
    <lineage>
        <taxon>Eukaryota</taxon>
        <taxon>Viridiplantae</taxon>
        <taxon>Streptophyta</taxon>
        <taxon>Embryophyta</taxon>
        <taxon>Tracheophyta</taxon>
        <taxon>Spermatophyta</taxon>
        <taxon>Magnoliopsida</taxon>
        <taxon>eudicotyledons</taxon>
        <taxon>Gunneridae</taxon>
        <taxon>Pentapetalae</taxon>
        <taxon>rosids</taxon>
        <taxon>Vitales</taxon>
        <taxon>Vitaceae</taxon>
        <taxon>Viteae</taxon>
        <taxon>Vitis</taxon>
    </lineage>
</organism>
<sequence>MNYFPWLTLIVVLPISAGSLIFFLPHRGNKVIRWYTIFICMLELLLTTYVFCYHFQLDDPLIQLVEDYKWINFFDFDWRLGIDGLSIGPILLTGFITTLATLAAWPVTRDSRLFHFLMLAMYSGQIGSFSSRDLLLFFIMWELELIPVYLLLSMWGGKKRLYSATKFILYTAGGSIFLLLGVLGIGLYGSNEPTLNFETSANQSYPVALEIIFYIGFFIAFAVKSPIIPLHTWLPDTHGEAHYSTCMLLAGILLKMGAYGLVRINMELLPHAHSIFSPWLVVVGTMQIIYAASTSSGQRNLKKRIAYSSVSHMGFIIIGIGSITDTGLNGAILQIISHGFLGAALFFLAGTSYDRIRLIYLDEMGGIAIPMPKIFTMFSILSMASLALPGMSGFVAELIVFFGIITSQKFLLMPKILITFVMAIGMILTPIYSLSMSRQMFYGYKLFNAPNSYFFDSGPRELFVLISIFLPVIGIGIYPDFVLSLSVDKVEAILSNFFYR</sequence>
<comment type="catalytic activity">
    <reaction evidence="1">
        <text>a plastoquinone + NADH + (n+1) H(+)(in) = a plastoquinol + NAD(+) + n H(+)(out)</text>
        <dbReference type="Rhea" id="RHEA:42608"/>
        <dbReference type="Rhea" id="RHEA-COMP:9561"/>
        <dbReference type="Rhea" id="RHEA-COMP:9562"/>
        <dbReference type="ChEBI" id="CHEBI:15378"/>
        <dbReference type="ChEBI" id="CHEBI:17757"/>
        <dbReference type="ChEBI" id="CHEBI:57540"/>
        <dbReference type="ChEBI" id="CHEBI:57945"/>
        <dbReference type="ChEBI" id="CHEBI:62192"/>
    </reaction>
</comment>
<comment type="catalytic activity">
    <reaction evidence="1">
        <text>a plastoquinone + NADPH + (n+1) H(+)(in) = a plastoquinol + NADP(+) + n H(+)(out)</text>
        <dbReference type="Rhea" id="RHEA:42612"/>
        <dbReference type="Rhea" id="RHEA-COMP:9561"/>
        <dbReference type="Rhea" id="RHEA-COMP:9562"/>
        <dbReference type="ChEBI" id="CHEBI:15378"/>
        <dbReference type="ChEBI" id="CHEBI:17757"/>
        <dbReference type="ChEBI" id="CHEBI:57783"/>
        <dbReference type="ChEBI" id="CHEBI:58349"/>
        <dbReference type="ChEBI" id="CHEBI:62192"/>
    </reaction>
</comment>
<comment type="subcellular location">
    <subcellularLocation>
        <location evidence="1">Plastid</location>
        <location evidence="1">Chloroplast thylakoid membrane</location>
        <topology evidence="1">Multi-pass membrane protein</topology>
    </subcellularLocation>
</comment>
<comment type="similarity">
    <text evidence="1">Belongs to the complex I subunit 4 family.</text>
</comment>
<evidence type="ECO:0000255" key="1">
    <source>
        <dbReference type="HAMAP-Rule" id="MF_00491"/>
    </source>
</evidence>
<protein>
    <recommendedName>
        <fullName evidence="1">NAD(P)H-quinone oxidoreductase chain 4, chloroplastic</fullName>
        <ecNumber evidence="1">7.1.1.-</ecNumber>
    </recommendedName>
    <alternativeName>
        <fullName evidence="1">NAD(P)H dehydrogenase, chain 4</fullName>
    </alternativeName>
    <alternativeName>
        <fullName evidence="1">NADH-plastoquinone oxidoreductase chain 4</fullName>
    </alternativeName>
</protein>
<feature type="chain" id="PRO_0000275924" description="NAD(P)H-quinone oxidoreductase chain 4, chloroplastic">
    <location>
        <begin position="1"/>
        <end position="500"/>
    </location>
</feature>
<feature type="transmembrane region" description="Helical" evidence="1">
    <location>
        <begin position="4"/>
        <end position="24"/>
    </location>
</feature>
<feature type="transmembrane region" description="Helical" evidence="1">
    <location>
        <begin position="37"/>
        <end position="57"/>
    </location>
</feature>
<feature type="transmembrane region" description="Helical" evidence="1">
    <location>
        <begin position="87"/>
        <end position="107"/>
    </location>
</feature>
<feature type="transmembrane region" description="Helical" evidence="1">
    <location>
        <begin position="113"/>
        <end position="130"/>
    </location>
</feature>
<feature type="transmembrane region" description="Helical" evidence="1">
    <location>
        <begin position="134"/>
        <end position="154"/>
    </location>
</feature>
<feature type="transmembrane region" description="Helical" evidence="1">
    <location>
        <begin position="167"/>
        <end position="187"/>
    </location>
</feature>
<feature type="transmembrane region" description="Helical" evidence="1">
    <location>
        <begin position="208"/>
        <end position="228"/>
    </location>
</feature>
<feature type="transmembrane region" description="Helical" evidence="1">
    <location>
        <begin position="242"/>
        <end position="262"/>
    </location>
</feature>
<feature type="transmembrane region" description="Helical" evidence="1">
    <location>
        <begin position="272"/>
        <end position="292"/>
    </location>
</feature>
<feature type="transmembrane region" description="Helical" evidence="1">
    <location>
        <begin position="305"/>
        <end position="325"/>
    </location>
</feature>
<feature type="transmembrane region" description="Helical" evidence="1">
    <location>
        <begin position="330"/>
        <end position="350"/>
    </location>
</feature>
<feature type="transmembrane region" description="Helical" evidence="1">
    <location>
        <begin position="386"/>
        <end position="406"/>
    </location>
</feature>
<feature type="transmembrane region" description="Helical" evidence="1">
    <location>
        <begin position="416"/>
        <end position="436"/>
    </location>
</feature>
<feature type="transmembrane region" description="Helical" evidence="1">
    <location>
        <begin position="462"/>
        <end position="482"/>
    </location>
</feature>
<dbReference type="EC" id="7.1.1.-" evidence="1"/>
<dbReference type="EMBL" id="DQ424856">
    <property type="protein sequence ID" value="ABE47585.1"/>
    <property type="molecule type" value="Genomic_DNA"/>
</dbReference>
<dbReference type="RefSeq" id="YP_567128.1">
    <property type="nucleotide sequence ID" value="NC_007957.1"/>
</dbReference>
<dbReference type="SMR" id="Q0ZIW8"/>
<dbReference type="FunCoup" id="Q0ZIW8">
    <property type="interactions" value="14"/>
</dbReference>
<dbReference type="STRING" id="29760.Q0ZIW8"/>
<dbReference type="PaxDb" id="29760-VIT_00s0246g00190.t01"/>
<dbReference type="GeneID" id="4025039"/>
<dbReference type="KEGG" id="vvi:4025039"/>
<dbReference type="InParanoid" id="Q0ZIW8"/>
<dbReference type="OrthoDB" id="564260at2759"/>
<dbReference type="Proteomes" id="UP000009183">
    <property type="component" value="Chloroplast"/>
</dbReference>
<dbReference type="ExpressionAtlas" id="Q0ZIW8">
    <property type="expression patterns" value="baseline and differential"/>
</dbReference>
<dbReference type="GO" id="GO:0009535">
    <property type="term" value="C:chloroplast thylakoid membrane"/>
    <property type="evidence" value="ECO:0007669"/>
    <property type="project" value="UniProtKB-SubCell"/>
</dbReference>
<dbReference type="GO" id="GO:0008137">
    <property type="term" value="F:NADH dehydrogenase (ubiquinone) activity"/>
    <property type="evidence" value="ECO:0007669"/>
    <property type="project" value="InterPro"/>
</dbReference>
<dbReference type="GO" id="GO:0048039">
    <property type="term" value="F:ubiquinone binding"/>
    <property type="evidence" value="ECO:0000318"/>
    <property type="project" value="GO_Central"/>
</dbReference>
<dbReference type="GO" id="GO:0009060">
    <property type="term" value="P:aerobic respiration"/>
    <property type="evidence" value="ECO:0000318"/>
    <property type="project" value="GO_Central"/>
</dbReference>
<dbReference type="GO" id="GO:0042773">
    <property type="term" value="P:ATP synthesis coupled electron transport"/>
    <property type="evidence" value="ECO:0007669"/>
    <property type="project" value="InterPro"/>
</dbReference>
<dbReference type="GO" id="GO:0015990">
    <property type="term" value="P:electron transport coupled proton transport"/>
    <property type="evidence" value="ECO:0000318"/>
    <property type="project" value="GO_Central"/>
</dbReference>
<dbReference type="HAMAP" id="MF_00491">
    <property type="entry name" value="NDH1_NuoM"/>
    <property type="match status" value="1"/>
</dbReference>
<dbReference type="InterPro" id="IPR022997">
    <property type="entry name" value="NADH_Q_OxRdtase_chain4"/>
</dbReference>
<dbReference type="InterPro" id="IPR010227">
    <property type="entry name" value="NADH_Q_OxRdtase_chainM/4"/>
</dbReference>
<dbReference type="InterPro" id="IPR003918">
    <property type="entry name" value="NADH_UbQ_OxRdtase"/>
</dbReference>
<dbReference type="InterPro" id="IPR001750">
    <property type="entry name" value="ND/Mrp_TM"/>
</dbReference>
<dbReference type="NCBIfam" id="TIGR01972">
    <property type="entry name" value="NDH_I_M"/>
    <property type="match status" value="1"/>
</dbReference>
<dbReference type="PANTHER" id="PTHR43507:SF21">
    <property type="entry name" value="NAD(P)H-QUINONE OXIDOREDUCTASE CHAIN 4, CHLOROPLASTIC"/>
    <property type="match status" value="1"/>
</dbReference>
<dbReference type="PANTHER" id="PTHR43507">
    <property type="entry name" value="NADH-UBIQUINONE OXIDOREDUCTASE CHAIN 4"/>
    <property type="match status" value="1"/>
</dbReference>
<dbReference type="Pfam" id="PF00361">
    <property type="entry name" value="Proton_antipo_M"/>
    <property type="match status" value="1"/>
</dbReference>
<dbReference type="PRINTS" id="PR01437">
    <property type="entry name" value="NUOXDRDTASE4"/>
</dbReference>
<geneLocation type="chloroplast"/>
<accession>Q0ZIW8</accession>
<keyword id="KW-0150">Chloroplast</keyword>
<keyword id="KW-0472">Membrane</keyword>
<keyword id="KW-0520">NAD</keyword>
<keyword id="KW-0521">NADP</keyword>
<keyword id="KW-0934">Plastid</keyword>
<keyword id="KW-0618">Plastoquinone</keyword>
<keyword id="KW-0874">Quinone</keyword>
<keyword id="KW-1185">Reference proteome</keyword>
<keyword id="KW-0793">Thylakoid</keyword>
<keyword id="KW-1278">Translocase</keyword>
<keyword id="KW-0812">Transmembrane</keyword>
<keyword id="KW-1133">Transmembrane helix</keyword>
<name>NU4C_VITVI</name>
<gene>
    <name evidence="1" type="primary">ndhD</name>
</gene>